<accession>P38758</accession>
<accession>D3DKV4</accession>
<protein>
    <recommendedName>
        <fullName>Putative oxidoreductase TDA3</fullName>
        <ecNumber>1.-.-.-</ecNumber>
    </recommendedName>
    <alternativeName>
        <fullName>Batten disease protein 3</fullName>
    </alternativeName>
    <alternativeName>
        <fullName>Topoisomerase I damage affected protein 3</fullName>
    </alternativeName>
</protein>
<gene>
    <name type="primary">TDA3</name>
    <name type="synonym">BTN3</name>
    <name type="ordered locus">YHR009C</name>
</gene>
<proteinExistence type="evidence at protein level"/>
<sequence length="523" mass="57614">MGEDFMHPPFQTYPSKNSEGKKHIVIVGGGIIGCCTAYYLTQHPSFSPSTHHITIIESRRIAGGASGKAGGLLASWAFPHQIVPLSFQLHQELSDEYDGENNWDYRRLTTVSLEADVREEVIENYERLSKKAYNLNVPPPKKRPGYISNKFNIGDSNSSLSSSGSSLKNDSASNEEEGSDIHVSSSVPSLHSLTNERMRSHTNSASDLDSVSPVEQLRETNIHNPLPADLDWIRRELVNDWSSLGGTDTTAQLHPYKFTHFILSKAMETGAVDLLLGKVVGLKCDEMDCVHSLKYLPSVVKNRRNSRGHAENPDIKLGTIFNDENAKPIEINDIQQIVLSMGPWTSKILKDCPISGLRAHSVTIKPSEKTVSPYAILAELKVNDREFFSPEMYARKDEVYVCGEGDTLVNIPESSDDVEVVSEKCDELYHYVSKLSPTLSKGHLLRKQACFLPVLNVPTSSGPLIGETNVKDLYIASGHSCWGINNAPATGKLMAEILLDGEATSAEISSLDPKLYFDATILS</sequence>
<reference key="1">
    <citation type="journal article" date="1994" name="Science">
        <title>Complete nucleotide sequence of Saccharomyces cerevisiae chromosome VIII.</title>
        <authorList>
            <person name="Johnston M."/>
            <person name="Andrews S."/>
            <person name="Brinkman R."/>
            <person name="Cooper J."/>
            <person name="Ding H."/>
            <person name="Dover J."/>
            <person name="Du Z."/>
            <person name="Favello A."/>
            <person name="Fulton L."/>
            <person name="Gattung S."/>
            <person name="Geisel C."/>
            <person name="Kirsten J."/>
            <person name="Kucaba T."/>
            <person name="Hillier L.W."/>
            <person name="Jier M."/>
            <person name="Johnston L."/>
            <person name="Langston Y."/>
            <person name="Latreille P."/>
            <person name="Louis E.J."/>
            <person name="Macri C."/>
            <person name="Mardis E."/>
            <person name="Menezes S."/>
            <person name="Mouser L."/>
            <person name="Nhan M."/>
            <person name="Rifkin L."/>
            <person name="Riles L."/>
            <person name="St Peter H."/>
            <person name="Trevaskis E."/>
            <person name="Vaughan K."/>
            <person name="Vignati D."/>
            <person name="Wilcox L."/>
            <person name="Wohldman P."/>
            <person name="Waterston R."/>
            <person name="Wilson R."/>
            <person name="Vaudin M."/>
        </authorList>
    </citation>
    <scope>NUCLEOTIDE SEQUENCE [LARGE SCALE GENOMIC DNA]</scope>
    <source>
        <strain>ATCC 204508 / S288c</strain>
    </source>
</reference>
<reference key="2">
    <citation type="journal article" date="2014" name="G3 (Bethesda)">
        <title>The reference genome sequence of Saccharomyces cerevisiae: Then and now.</title>
        <authorList>
            <person name="Engel S.R."/>
            <person name="Dietrich F.S."/>
            <person name="Fisk D.G."/>
            <person name="Binkley G."/>
            <person name="Balakrishnan R."/>
            <person name="Costanzo M.C."/>
            <person name="Dwight S.S."/>
            <person name="Hitz B.C."/>
            <person name="Karra K."/>
            <person name="Nash R.S."/>
            <person name="Weng S."/>
            <person name="Wong E.D."/>
            <person name="Lloyd P."/>
            <person name="Skrzypek M.S."/>
            <person name="Miyasato S.R."/>
            <person name="Simison M."/>
            <person name="Cherry J.M."/>
        </authorList>
    </citation>
    <scope>GENOME REANNOTATION</scope>
    <source>
        <strain>ATCC 204508 / S288c</strain>
    </source>
</reference>
<reference key="3">
    <citation type="journal article" date="2000" name="J. Cell Biol.">
        <title>The yeast nuclear pore complex: composition, architecture, and transport mechanism.</title>
        <authorList>
            <person name="Rout M.P."/>
            <person name="Aitchison J.D."/>
            <person name="Suprapto A."/>
            <person name="Hjertaas K."/>
            <person name="Zhao Y."/>
            <person name="Chait B.T."/>
        </authorList>
    </citation>
    <scope>SUBCELLULAR LOCATION</scope>
    <scope>IDENTIFICATION BY MASS SPECTROMETRY</scope>
</reference>
<reference key="4">
    <citation type="journal article" date="2003" name="Nature">
        <title>Sequencing and comparison of yeast species to identify genes and regulatory elements.</title>
        <authorList>
            <person name="Kellis M."/>
            <person name="Patterson N."/>
            <person name="Endrizzi M."/>
            <person name="Birren B.W."/>
            <person name="Lander E.S."/>
        </authorList>
    </citation>
    <scope>IDENTIFICATION OF PROBABLE INITIATION SITE</scope>
</reference>
<reference key="5">
    <citation type="journal article" date="2003" name="Nature">
        <title>Global analysis of protein localization in budding yeast.</title>
        <authorList>
            <person name="Huh W.-K."/>
            <person name="Falvo J.V."/>
            <person name="Gerke L.C."/>
            <person name="Carroll A.S."/>
            <person name="Howson R.W."/>
            <person name="Weissman J.S."/>
            <person name="O'Shea E.K."/>
        </authorList>
    </citation>
    <scope>SUBCELLULAR LOCATION [LARGE SCALE ANALYSIS]</scope>
</reference>
<reference key="6">
    <citation type="journal article" date="2003" name="Nature">
        <title>Global analysis of protein expression in yeast.</title>
        <authorList>
            <person name="Ghaemmaghami S."/>
            <person name="Huh W.-K."/>
            <person name="Bower K."/>
            <person name="Howson R.W."/>
            <person name="Belle A."/>
            <person name="Dephoure N."/>
            <person name="O'Shea E.K."/>
            <person name="Weissman J.S."/>
        </authorList>
    </citation>
    <scope>LEVEL OF PROTEIN EXPRESSION [LARGE SCALE ANALYSIS]</scope>
</reference>
<reference key="7">
    <citation type="journal article" date="2007" name="Proc. Natl. Acad. Sci. U.S.A.">
        <title>Analysis of phosphorylation sites on proteins from Saccharomyces cerevisiae by electron transfer dissociation (ETD) mass spectrometry.</title>
        <authorList>
            <person name="Chi A."/>
            <person name="Huttenhower C."/>
            <person name="Geer L.Y."/>
            <person name="Coon J.J."/>
            <person name="Syka J.E.P."/>
            <person name="Bai D.L."/>
            <person name="Shabanowitz J."/>
            <person name="Burke D.J."/>
            <person name="Troyanskaya O.G."/>
            <person name="Hunt D.F."/>
        </authorList>
    </citation>
    <scope>PHOSPHORYLATION [LARGE SCALE ANALYSIS] AT SER-306</scope>
    <scope>IDENTIFICATION BY MASS SPECTROMETRY [LARGE SCALE ANALYSIS]</scope>
</reference>
<reference key="8">
    <citation type="journal article" date="2008" name="Mol. Cell. Proteomics">
        <title>A multidimensional chromatography technology for in-depth phosphoproteome analysis.</title>
        <authorList>
            <person name="Albuquerque C.P."/>
            <person name="Smolka M.B."/>
            <person name="Payne S.H."/>
            <person name="Bafna V."/>
            <person name="Eng J."/>
            <person name="Zhou H."/>
        </authorList>
    </citation>
    <scope>IDENTIFICATION BY MASS SPECTROMETRY [LARGE SCALE ANALYSIS]</scope>
</reference>
<reference key="9">
    <citation type="journal article" date="2009" name="Science">
        <title>Global analysis of Cdk1 substrate phosphorylation sites provides insights into evolution.</title>
        <authorList>
            <person name="Holt L.J."/>
            <person name="Tuch B.B."/>
            <person name="Villen J."/>
            <person name="Johnson A.D."/>
            <person name="Gygi S.P."/>
            <person name="Morgan D.O."/>
        </authorList>
    </citation>
    <scope>PHOSPHORYLATION [LARGE SCALE ANALYSIS] AT SER-189 AND SER-204</scope>
    <scope>IDENTIFICATION BY MASS SPECTROMETRY [LARGE SCALE ANALYSIS]</scope>
</reference>
<reference key="10">
    <citation type="journal article" date="2010" name="Genome Res.">
        <title>MRC1-dependent scaling of the budding yeast DNA replication timing program.</title>
        <authorList>
            <person name="Koren A."/>
            <person name="Soifer I."/>
            <person name="Barkai N."/>
        </authorList>
    </citation>
    <scope>FUNCTION</scope>
</reference>
<reference key="11">
    <citation type="journal article" date="2011" name="Genome Res.">
        <title>Selective ploidy ablation, a high-throughput plasmid transfer protocol, identifies new genes affecting topoisomerase I-induced DNA damage.</title>
        <authorList>
            <person name="Reid R.J."/>
            <person name="Gonzalez-Barrera S."/>
            <person name="Sunjevaric I."/>
            <person name="Alvaro D."/>
            <person name="Ciccone S."/>
            <person name="Wagner M."/>
            <person name="Rothstein R."/>
        </authorList>
    </citation>
    <scope>DISRUPTION PHENOTYPE</scope>
</reference>
<reference key="12">
    <citation type="journal article" date="2011" name="Mol. Biol. Cell">
        <title>Btn3 is a negative regulator of Btn2-mediated endosomal protein trafficking and prion curing in yeast.</title>
        <authorList>
            <person name="Kanneganti V."/>
            <person name="Kama R."/>
            <person name="Gerst J.E."/>
        </authorList>
    </citation>
    <scope>FUNCTION</scope>
    <scope>SUBCELLULAR LOCATION</scope>
    <scope>INTERACTION WITH BTN2</scope>
</reference>
<comment type="function">
    <text evidence="3 5">Putative oxidoreductase that negatively regulates the retrieval of cargo from late endosomes to the Golgi. Regulates YIF1 and KEX2 localization. Required for fast DNA replication.</text>
</comment>
<comment type="subunit">
    <text evidence="5">Interacts with BTN2.</text>
</comment>
<comment type="subcellular location">
    <subcellularLocation>
        <location>Cytoplasm</location>
    </subcellularLocation>
    <subcellularLocation>
        <location>Late endosome</location>
    </subcellularLocation>
    <text>The recruitment from the cytoplasm to endosomal structures is facilitated by BTN2.</text>
</comment>
<comment type="disruption phenotype">
    <text evidence="4">Leads to cell death when overexpressing the camptothecin mimetic TOP1-T(722)A mutant.</text>
</comment>
<comment type="miscellaneous">
    <text evidence="2">Present with 5240 molecules/cell in log phase SD medium.</text>
</comment>
<comment type="similarity">
    <text evidence="6">Belongs to the TDA3 family.</text>
</comment>
<comment type="sequence caution" evidence="6">
    <conflict type="erroneous initiation">
        <sequence resource="EMBL-CDS" id="AAB68938"/>
    </conflict>
    <text>Truncated N-terminus.</text>
</comment>
<dbReference type="EC" id="1.-.-.-"/>
<dbReference type="EMBL" id="U10400">
    <property type="protein sequence ID" value="AAB68938.1"/>
    <property type="status" value="ALT_INIT"/>
    <property type="molecule type" value="Genomic_DNA"/>
</dbReference>
<dbReference type="EMBL" id="BK006934">
    <property type="protein sequence ID" value="DAA06698.1"/>
    <property type="molecule type" value="Genomic_DNA"/>
</dbReference>
<dbReference type="PIR" id="S46784">
    <property type="entry name" value="S46784"/>
</dbReference>
<dbReference type="RefSeq" id="NP_011873.1">
    <property type="nucleotide sequence ID" value="NM_001179139.1"/>
</dbReference>
<dbReference type="SMR" id="P38758"/>
<dbReference type="BioGRID" id="36436">
    <property type="interactions" value="74"/>
</dbReference>
<dbReference type="DIP" id="DIP-4617N"/>
<dbReference type="FunCoup" id="P38758">
    <property type="interactions" value="155"/>
</dbReference>
<dbReference type="IntAct" id="P38758">
    <property type="interactions" value="15"/>
</dbReference>
<dbReference type="STRING" id="4932.YHR009C"/>
<dbReference type="iPTMnet" id="P38758"/>
<dbReference type="PaxDb" id="4932-YHR009C"/>
<dbReference type="PeptideAtlas" id="P38758"/>
<dbReference type="EnsemblFungi" id="YHR009C_mRNA">
    <property type="protein sequence ID" value="YHR009C"/>
    <property type="gene ID" value="YHR009C"/>
</dbReference>
<dbReference type="GeneID" id="856400"/>
<dbReference type="KEGG" id="sce:YHR009C"/>
<dbReference type="AGR" id="SGD:S000001051"/>
<dbReference type="SGD" id="S000001051">
    <property type="gene designation" value="TDA3"/>
</dbReference>
<dbReference type="VEuPathDB" id="FungiDB:YHR009C"/>
<dbReference type="eggNOG" id="KOG2852">
    <property type="taxonomic scope" value="Eukaryota"/>
</dbReference>
<dbReference type="GeneTree" id="ENSGT00530000068930"/>
<dbReference type="HOGENOM" id="CLU_007884_14_0_1"/>
<dbReference type="InParanoid" id="P38758"/>
<dbReference type="OMA" id="DDTVYAC"/>
<dbReference type="OrthoDB" id="498204at2759"/>
<dbReference type="BioCyc" id="YEAST:G3O-31072-MONOMER"/>
<dbReference type="BioGRID-ORCS" id="856400">
    <property type="hits" value="3 hits in 10 CRISPR screens"/>
</dbReference>
<dbReference type="PRO" id="PR:P38758"/>
<dbReference type="Proteomes" id="UP000002311">
    <property type="component" value="Chromosome VIII"/>
</dbReference>
<dbReference type="RNAct" id="P38758">
    <property type="molecule type" value="protein"/>
</dbReference>
<dbReference type="GO" id="GO:0005737">
    <property type="term" value="C:cytoplasm"/>
    <property type="evidence" value="ECO:0000314"/>
    <property type="project" value="SGD"/>
</dbReference>
<dbReference type="GO" id="GO:0005829">
    <property type="term" value="C:cytosol"/>
    <property type="evidence" value="ECO:0007669"/>
    <property type="project" value="GOC"/>
</dbReference>
<dbReference type="GO" id="GO:0005770">
    <property type="term" value="C:late endosome"/>
    <property type="evidence" value="ECO:0000314"/>
    <property type="project" value="SGD"/>
</dbReference>
<dbReference type="GO" id="GO:0016491">
    <property type="term" value="F:oxidoreductase activity"/>
    <property type="evidence" value="ECO:0007669"/>
    <property type="project" value="UniProtKB-KW"/>
</dbReference>
<dbReference type="GO" id="GO:0042147">
    <property type="term" value="P:retrograde transport, endosome to Golgi"/>
    <property type="evidence" value="ECO:0000315"/>
    <property type="project" value="SGD"/>
</dbReference>
<dbReference type="FunFam" id="3.50.50.60:FF:000237">
    <property type="entry name" value="FAD dependent oxidoreductase"/>
    <property type="match status" value="1"/>
</dbReference>
<dbReference type="FunFam" id="3.30.9.10:FF:000035">
    <property type="entry name" value="Putative oxidoreductase TDA3"/>
    <property type="match status" value="1"/>
</dbReference>
<dbReference type="Gene3D" id="3.50.50.60">
    <property type="entry name" value="FAD/NAD(P)-binding domain"/>
    <property type="match status" value="2"/>
</dbReference>
<dbReference type="InterPro" id="IPR006076">
    <property type="entry name" value="FAD-dep_OxRdtase"/>
</dbReference>
<dbReference type="InterPro" id="IPR036188">
    <property type="entry name" value="FAD/NAD-bd_sf"/>
</dbReference>
<dbReference type="PANTHER" id="PTHR13847:SF150">
    <property type="entry name" value="OXIDOREDUCTASE TDA3-RELATED"/>
    <property type="match status" value="1"/>
</dbReference>
<dbReference type="PANTHER" id="PTHR13847">
    <property type="entry name" value="SARCOSINE DEHYDROGENASE-RELATED"/>
    <property type="match status" value="1"/>
</dbReference>
<dbReference type="Pfam" id="PF01266">
    <property type="entry name" value="DAO"/>
    <property type="match status" value="2"/>
</dbReference>
<dbReference type="SUPFAM" id="SSF51971">
    <property type="entry name" value="Nucleotide-binding domain"/>
    <property type="match status" value="1"/>
</dbReference>
<feature type="chain" id="PRO_0000202886" description="Putative oxidoreductase TDA3">
    <location>
        <begin position="1"/>
        <end position="523"/>
    </location>
</feature>
<feature type="region of interest" description="Disordered" evidence="1">
    <location>
        <begin position="157"/>
        <end position="189"/>
    </location>
</feature>
<feature type="compositionally biased region" description="Low complexity" evidence="1">
    <location>
        <begin position="157"/>
        <end position="172"/>
    </location>
</feature>
<feature type="modified residue" description="Phosphoserine" evidence="8">
    <location>
        <position position="189"/>
    </location>
</feature>
<feature type="modified residue" description="Phosphoserine" evidence="8">
    <location>
        <position position="204"/>
    </location>
</feature>
<feature type="modified residue" description="Phosphoserine" evidence="7">
    <location>
        <position position="306"/>
    </location>
</feature>
<name>TDA3_YEAST</name>
<keyword id="KW-0963">Cytoplasm</keyword>
<keyword id="KW-0967">Endosome</keyword>
<keyword id="KW-0560">Oxidoreductase</keyword>
<keyword id="KW-0597">Phosphoprotein</keyword>
<keyword id="KW-1185">Reference proteome</keyword>
<keyword id="KW-0813">Transport</keyword>
<organism>
    <name type="scientific">Saccharomyces cerevisiae (strain ATCC 204508 / S288c)</name>
    <name type="common">Baker's yeast</name>
    <dbReference type="NCBI Taxonomy" id="559292"/>
    <lineage>
        <taxon>Eukaryota</taxon>
        <taxon>Fungi</taxon>
        <taxon>Dikarya</taxon>
        <taxon>Ascomycota</taxon>
        <taxon>Saccharomycotina</taxon>
        <taxon>Saccharomycetes</taxon>
        <taxon>Saccharomycetales</taxon>
        <taxon>Saccharomycetaceae</taxon>
        <taxon>Saccharomyces</taxon>
    </lineage>
</organism>
<evidence type="ECO:0000256" key="1">
    <source>
        <dbReference type="SAM" id="MobiDB-lite"/>
    </source>
</evidence>
<evidence type="ECO:0000269" key="2">
    <source>
    </source>
</evidence>
<evidence type="ECO:0000269" key="3">
    <source>
    </source>
</evidence>
<evidence type="ECO:0000269" key="4">
    <source>
    </source>
</evidence>
<evidence type="ECO:0000269" key="5">
    <source>
    </source>
</evidence>
<evidence type="ECO:0000305" key="6"/>
<evidence type="ECO:0007744" key="7">
    <source>
    </source>
</evidence>
<evidence type="ECO:0007744" key="8">
    <source>
    </source>
</evidence>